<feature type="chain" id="PRO_0000195920" description="Histone H1t">
    <location>
        <begin position="1"/>
        <end position="211"/>
    </location>
</feature>
<feature type="domain" description="H15" evidence="5">
    <location>
        <begin position="39"/>
        <end position="112"/>
    </location>
</feature>
<feature type="region of interest" description="Disordered" evidence="6">
    <location>
        <begin position="1"/>
        <end position="42"/>
    </location>
</feature>
<feature type="region of interest" description="Disordered" evidence="6">
    <location>
        <begin position="101"/>
        <end position="211"/>
    </location>
</feature>
<feature type="compositionally biased region" description="Low complexity" evidence="6">
    <location>
        <begin position="1"/>
        <end position="16"/>
    </location>
</feature>
<feature type="compositionally biased region" description="Polar residues" evidence="6">
    <location>
        <begin position="32"/>
        <end position="42"/>
    </location>
</feature>
<feature type="compositionally biased region" description="Basic residues" evidence="6">
    <location>
        <begin position="121"/>
        <end position="135"/>
    </location>
</feature>
<feature type="compositionally biased region" description="Basic residues" evidence="6">
    <location>
        <begin position="147"/>
        <end position="156"/>
    </location>
</feature>
<feature type="compositionally biased region" description="Basic residues" evidence="6">
    <location>
        <begin position="176"/>
        <end position="189"/>
    </location>
</feature>
<feature type="site" description="Important for nucleosome binding properties" evidence="1">
    <location>
        <position position="55"/>
    </location>
</feature>
<feature type="modified residue" description="N-acetylalanine" evidence="7">
    <location>
        <position position="1"/>
    </location>
</feature>
<feature type="modified residue" description="Citrulline" evidence="3">
    <location>
        <position position="57"/>
    </location>
</feature>
<feature type="modified residue" description="Phosphoserine" evidence="4">
    <location>
        <position position="142"/>
    </location>
</feature>
<feature type="modified residue" description="Phosphothreonine" evidence="4">
    <location>
        <position position="158"/>
    </location>
</feature>
<feature type="modified residue" description="Phosphoserine" evidence="4">
    <location>
        <position position="166"/>
    </location>
</feature>
<feature type="modified residue" description="Phosphoserine" evidence="4">
    <location>
        <position position="181"/>
    </location>
</feature>
<keyword id="KW-0007">Acetylation</keyword>
<keyword id="KW-0158">Chromosome</keyword>
<keyword id="KW-0164">Citrullination</keyword>
<keyword id="KW-0217">Developmental protein</keyword>
<keyword id="KW-0221">Differentiation</keyword>
<keyword id="KW-0903">Direct protein sequencing</keyword>
<keyword id="KW-0238">DNA-binding</keyword>
<keyword id="KW-0539">Nucleus</keyword>
<keyword id="KW-0597">Phosphoprotein</keyword>
<keyword id="KW-1185">Reference proteome</keyword>
<keyword id="KW-0744">Spermatogenesis</keyword>
<accession>P06348</accession>
<protein>
    <recommendedName>
        <fullName>Histone H1t</fullName>
    </recommendedName>
</protein>
<gene>
    <name evidence="2" type="primary">H1-6</name>
    <name type="synonym">H1FT</name>
</gene>
<name>H1T_PIG</name>
<organism>
    <name type="scientific">Sus scrofa</name>
    <name type="common">Pig</name>
    <dbReference type="NCBI Taxonomy" id="9823"/>
    <lineage>
        <taxon>Eukaryota</taxon>
        <taxon>Metazoa</taxon>
        <taxon>Chordata</taxon>
        <taxon>Craniata</taxon>
        <taxon>Vertebrata</taxon>
        <taxon>Euteleostomi</taxon>
        <taxon>Mammalia</taxon>
        <taxon>Eutheria</taxon>
        <taxon>Laurasiatheria</taxon>
        <taxon>Artiodactyla</taxon>
        <taxon>Suina</taxon>
        <taxon>Suidae</taxon>
        <taxon>Sus</taxon>
    </lineage>
</organism>
<comment type="function">
    <text evidence="2">Testis-specific histone H1 that forms less compacted chromatin compared to other H1 histone subtypes. Formation of more relaxed chromatin may be required to promote chromatin architecture required for proper chromosome regulation during meiosis, such as homologous recombination. Histones H1 act as linkers that bind to nucleosomes and compact polynucleosomes into a higher-order chromatin configuration.</text>
</comment>
<comment type="subcellular location">
    <subcellularLocation>
        <location evidence="8">Nucleus</location>
    </subcellularLocation>
    <subcellularLocation>
        <location evidence="8">Chromosome</location>
    </subcellularLocation>
</comment>
<comment type="tissue specificity">
    <text evidence="7">Testis-specific.</text>
</comment>
<comment type="developmental stage">
    <text evidence="7">This histone is a testis-specific H1 variant that appears during meiosis in spermatogenesis.</text>
</comment>
<comment type="PTM">
    <text evidence="1">Phosphorylated in early spermatids.</text>
</comment>
<comment type="PTM">
    <text evidence="3">Citrullination at Arg-57 (H1R54ci) by PADI4 takes place within the DNA-binding site of H1 and results in its displacement from chromatin and global chromatin decondensation, thereby promoting pluripotency and stem cell maintenance.</text>
</comment>
<comment type="similarity">
    <text evidence="5">Belongs to the histone H1/H5 family.</text>
</comment>
<proteinExistence type="evidence at protein level"/>
<dbReference type="PIR" id="A02581">
    <property type="entry name" value="HSPG1T"/>
</dbReference>
<dbReference type="SMR" id="P06348"/>
<dbReference type="FunCoup" id="P06348">
    <property type="interactions" value="48"/>
</dbReference>
<dbReference type="iPTMnet" id="P06348"/>
<dbReference type="PeptideAtlas" id="P06348"/>
<dbReference type="InParanoid" id="P06348"/>
<dbReference type="Proteomes" id="UP000008227">
    <property type="component" value="Unplaced"/>
</dbReference>
<dbReference type="Proteomes" id="UP000314985">
    <property type="component" value="Unplaced"/>
</dbReference>
<dbReference type="Proteomes" id="UP000694570">
    <property type="component" value="Unplaced"/>
</dbReference>
<dbReference type="Proteomes" id="UP000694571">
    <property type="component" value="Unplaced"/>
</dbReference>
<dbReference type="Proteomes" id="UP000694720">
    <property type="component" value="Unplaced"/>
</dbReference>
<dbReference type="Proteomes" id="UP000694722">
    <property type="component" value="Unplaced"/>
</dbReference>
<dbReference type="Proteomes" id="UP000694723">
    <property type="component" value="Unplaced"/>
</dbReference>
<dbReference type="Proteomes" id="UP000694724">
    <property type="component" value="Unplaced"/>
</dbReference>
<dbReference type="Proteomes" id="UP000694725">
    <property type="component" value="Unplaced"/>
</dbReference>
<dbReference type="Proteomes" id="UP000694726">
    <property type="component" value="Unplaced"/>
</dbReference>
<dbReference type="Proteomes" id="UP000694727">
    <property type="component" value="Unplaced"/>
</dbReference>
<dbReference type="Proteomes" id="UP000694728">
    <property type="component" value="Unplaced"/>
</dbReference>
<dbReference type="GO" id="GO:0000786">
    <property type="term" value="C:nucleosome"/>
    <property type="evidence" value="ECO:0007669"/>
    <property type="project" value="InterPro"/>
</dbReference>
<dbReference type="GO" id="GO:0005634">
    <property type="term" value="C:nucleus"/>
    <property type="evidence" value="ECO:0000318"/>
    <property type="project" value="GO_Central"/>
</dbReference>
<dbReference type="GO" id="GO:0003690">
    <property type="term" value="F:double-stranded DNA binding"/>
    <property type="evidence" value="ECO:0000318"/>
    <property type="project" value="GO_Central"/>
</dbReference>
<dbReference type="GO" id="GO:0031492">
    <property type="term" value="F:nucleosomal DNA binding"/>
    <property type="evidence" value="ECO:0000318"/>
    <property type="project" value="GO_Central"/>
</dbReference>
<dbReference type="GO" id="GO:0030527">
    <property type="term" value="F:structural constituent of chromatin"/>
    <property type="evidence" value="ECO:0007669"/>
    <property type="project" value="InterPro"/>
</dbReference>
<dbReference type="GO" id="GO:0030154">
    <property type="term" value="P:cell differentiation"/>
    <property type="evidence" value="ECO:0007669"/>
    <property type="project" value="UniProtKB-KW"/>
</dbReference>
<dbReference type="GO" id="GO:0030261">
    <property type="term" value="P:chromosome condensation"/>
    <property type="evidence" value="ECO:0000318"/>
    <property type="project" value="GO_Central"/>
</dbReference>
<dbReference type="GO" id="GO:0045910">
    <property type="term" value="P:negative regulation of DNA recombination"/>
    <property type="evidence" value="ECO:0000318"/>
    <property type="project" value="GO_Central"/>
</dbReference>
<dbReference type="GO" id="GO:0006334">
    <property type="term" value="P:nucleosome assembly"/>
    <property type="evidence" value="ECO:0007669"/>
    <property type="project" value="InterPro"/>
</dbReference>
<dbReference type="GO" id="GO:0007283">
    <property type="term" value="P:spermatogenesis"/>
    <property type="evidence" value="ECO:0000318"/>
    <property type="project" value="GO_Central"/>
</dbReference>
<dbReference type="CDD" id="cd00073">
    <property type="entry name" value="H15"/>
    <property type="match status" value="1"/>
</dbReference>
<dbReference type="FunFam" id="1.10.10.10:FF:000075">
    <property type="entry name" value="Histone H1 like"/>
    <property type="match status" value="1"/>
</dbReference>
<dbReference type="Gene3D" id="1.10.10.10">
    <property type="entry name" value="Winged helix-like DNA-binding domain superfamily/Winged helix DNA-binding domain"/>
    <property type="match status" value="1"/>
</dbReference>
<dbReference type="InterPro" id="IPR005819">
    <property type="entry name" value="H1/H5"/>
</dbReference>
<dbReference type="InterPro" id="IPR005818">
    <property type="entry name" value="Histone_H1/H5_H15"/>
</dbReference>
<dbReference type="InterPro" id="IPR036388">
    <property type="entry name" value="WH-like_DNA-bd_sf"/>
</dbReference>
<dbReference type="InterPro" id="IPR036390">
    <property type="entry name" value="WH_DNA-bd_sf"/>
</dbReference>
<dbReference type="Pfam" id="PF00538">
    <property type="entry name" value="Linker_histone"/>
    <property type="match status" value="1"/>
</dbReference>
<dbReference type="PRINTS" id="PR00624">
    <property type="entry name" value="HISTONEH5"/>
</dbReference>
<dbReference type="SMART" id="SM00526">
    <property type="entry name" value="H15"/>
    <property type="match status" value="1"/>
</dbReference>
<dbReference type="SUPFAM" id="SSF46785">
    <property type="entry name" value="Winged helix' DNA-binding domain"/>
    <property type="match status" value="1"/>
</dbReference>
<dbReference type="PROSITE" id="PS51504">
    <property type="entry name" value="H15"/>
    <property type="match status" value="1"/>
</dbReference>
<reference key="1">
    <citation type="journal article" date="1984" name="J. Biol. Chem.">
        <title>The amino acid sequence of boar H1t, a testis-specific H1 histone variant.</title>
        <authorList>
            <person name="Cole K.D."/>
            <person name="York R.G."/>
            <person name="Kistler W.S."/>
        </authorList>
    </citation>
    <scope>PROTEIN SEQUENCE</scope>
    <scope>TISSUE SPECIFICITY</scope>
    <scope>DEVELOPMENTAL STAGE</scope>
    <scope>ACETYLATION AT ALA-1</scope>
</reference>
<sequence length="211" mass="22059">AETAPAAPADSVPASVEKPPAKKRGKKPVGLTGTSRKAPSASVSKLITEALSVSQERAGMSLAALKKALAAAGYDVEKNNSRIKLGLKSLVGKGILVQTRGTGASGSFKLSKKAAPEPRKGKVKKPAAAKTKKLVLSRDSKSPKSAKANKRAKKSRTTAAQKAARSGRKTKEAKVKQQRKSPAKARAAKPKAGNPKLTQQKTNPRKATNRK</sequence>
<evidence type="ECO:0000250" key="1">
    <source>
        <dbReference type="UniProtKB" id="P06349"/>
    </source>
</evidence>
<evidence type="ECO:0000250" key="2">
    <source>
        <dbReference type="UniProtKB" id="P22492"/>
    </source>
</evidence>
<evidence type="ECO:0000250" key="3">
    <source>
        <dbReference type="UniProtKB" id="P43275"/>
    </source>
</evidence>
<evidence type="ECO:0000250" key="4">
    <source>
        <dbReference type="UniProtKB" id="Q07133"/>
    </source>
</evidence>
<evidence type="ECO:0000255" key="5">
    <source>
        <dbReference type="PROSITE-ProRule" id="PRU00837"/>
    </source>
</evidence>
<evidence type="ECO:0000256" key="6">
    <source>
        <dbReference type="SAM" id="MobiDB-lite"/>
    </source>
</evidence>
<evidence type="ECO:0000269" key="7">
    <source>
    </source>
</evidence>
<evidence type="ECO:0000305" key="8"/>